<feature type="chain" id="PRO_1000190750" description="3-deoxy-manno-octulosonate cytidylyltransferase">
    <location>
        <begin position="1"/>
        <end position="252"/>
    </location>
</feature>
<organism>
    <name type="scientific">Thiobacillus denitrificans (strain ATCC 25259 / T1)</name>
    <dbReference type="NCBI Taxonomy" id="292415"/>
    <lineage>
        <taxon>Bacteria</taxon>
        <taxon>Pseudomonadati</taxon>
        <taxon>Pseudomonadota</taxon>
        <taxon>Betaproteobacteria</taxon>
        <taxon>Nitrosomonadales</taxon>
        <taxon>Thiobacillaceae</taxon>
        <taxon>Thiobacillus</taxon>
    </lineage>
</organism>
<keyword id="KW-0963">Cytoplasm</keyword>
<keyword id="KW-0448">Lipopolysaccharide biosynthesis</keyword>
<keyword id="KW-0548">Nucleotidyltransferase</keyword>
<keyword id="KW-1185">Reference proteome</keyword>
<keyword id="KW-0808">Transferase</keyword>
<evidence type="ECO:0000255" key="1">
    <source>
        <dbReference type="HAMAP-Rule" id="MF_00057"/>
    </source>
</evidence>
<gene>
    <name evidence="1" type="primary">kdsB</name>
    <name type="ordered locus">Tbd_1505</name>
</gene>
<name>KDSB_THIDA</name>
<comment type="function">
    <text evidence="1">Activates KDO (a required 8-carbon sugar) for incorporation into bacterial lipopolysaccharide in Gram-negative bacteria.</text>
</comment>
<comment type="catalytic activity">
    <reaction evidence="1">
        <text>3-deoxy-alpha-D-manno-oct-2-ulosonate + CTP = CMP-3-deoxy-beta-D-manno-octulosonate + diphosphate</text>
        <dbReference type="Rhea" id="RHEA:23448"/>
        <dbReference type="ChEBI" id="CHEBI:33019"/>
        <dbReference type="ChEBI" id="CHEBI:37563"/>
        <dbReference type="ChEBI" id="CHEBI:85986"/>
        <dbReference type="ChEBI" id="CHEBI:85987"/>
        <dbReference type="EC" id="2.7.7.38"/>
    </reaction>
</comment>
<comment type="pathway">
    <text evidence="1">Nucleotide-sugar biosynthesis; CMP-3-deoxy-D-manno-octulosonate biosynthesis; CMP-3-deoxy-D-manno-octulosonate from 3-deoxy-D-manno-octulosonate and CTP: step 1/1.</text>
</comment>
<comment type="pathway">
    <text evidence="1">Bacterial outer membrane biogenesis; lipopolysaccharide biosynthesis.</text>
</comment>
<comment type="subcellular location">
    <subcellularLocation>
        <location evidence="1">Cytoplasm</location>
    </subcellularLocation>
</comment>
<comment type="similarity">
    <text evidence="1">Belongs to the KdsB family.</text>
</comment>
<accession>Q3SIR7</accession>
<protein>
    <recommendedName>
        <fullName evidence="1">3-deoxy-manno-octulosonate cytidylyltransferase</fullName>
        <ecNumber evidence="1">2.7.7.38</ecNumber>
    </recommendedName>
    <alternativeName>
        <fullName evidence="1">CMP-2-keto-3-deoxyoctulosonic acid synthase</fullName>
        <shortName evidence="1">CKS</shortName>
        <shortName evidence="1">CMP-KDO synthase</shortName>
    </alternativeName>
</protein>
<reference key="1">
    <citation type="journal article" date="2006" name="J. Bacteriol.">
        <title>The genome sequence of the obligately chemolithoautotrophic, facultatively anaerobic bacterium Thiobacillus denitrificans.</title>
        <authorList>
            <person name="Beller H.R."/>
            <person name="Chain P.S."/>
            <person name="Letain T.E."/>
            <person name="Chakicherla A."/>
            <person name="Larimer F.W."/>
            <person name="Richardson P.M."/>
            <person name="Coleman M.A."/>
            <person name="Wood A.P."/>
            <person name="Kelly D.P."/>
        </authorList>
    </citation>
    <scope>NUCLEOTIDE SEQUENCE [LARGE SCALE GENOMIC DNA]</scope>
    <source>
        <strain>ATCC 25259 / T1</strain>
    </source>
</reference>
<proteinExistence type="inferred from homology"/>
<dbReference type="EC" id="2.7.7.38" evidence="1"/>
<dbReference type="EMBL" id="CP000116">
    <property type="protein sequence ID" value="AAZ97458.1"/>
    <property type="molecule type" value="Genomic_DNA"/>
</dbReference>
<dbReference type="RefSeq" id="WP_011312017.1">
    <property type="nucleotide sequence ID" value="NC_007404.1"/>
</dbReference>
<dbReference type="SMR" id="Q3SIR7"/>
<dbReference type="STRING" id="292415.Tbd_1505"/>
<dbReference type="KEGG" id="tbd:Tbd_1505"/>
<dbReference type="eggNOG" id="COG1212">
    <property type="taxonomic scope" value="Bacteria"/>
</dbReference>
<dbReference type="HOGENOM" id="CLU_065038_1_0_4"/>
<dbReference type="OrthoDB" id="9815559at2"/>
<dbReference type="UniPathway" id="UPA00030"/>
<dbReference type="UniPathway" id="UPA00358">
    <property type="reaction ID" value="UER00476"/>
</dbReference>
<dbReference type="Proteomes" id="UP000008291">
    <property type="component" value="Chromosome"/>
</dbReference>
<dbReference type="GO" id="GO:0005829">
    <property type="term" value="C:cytosol"/>
    <property type="evidence" value="ECO:0007669"/>
    <property type="project" value="TreeGrafter"/>
</dbReference>
<dbReference type="GO" id="GO:0008690">
    <property type="term" value="F:3-deoxy-manno-octulosonate cytidylyltransferase activity"/>
    <property type="evidence" value="ECO:0007669"/>
    <property type="project" value="UniProtKB-UniRule"/>
</dbReference>
<dbReference type="GO" id="GO:0033468">
    <property type="term" value="P:CMP-keto-3-deoxy-D-manno-octulosonic acid biosynthetic process"/>
    <property type="evidence" value="ECO:0007669"/>
    <property type="project" value="UniProtKB-UniRule"/>
</dbReference>
<dbReference type="GO" id="GO:0009103">
    <property type="term" value="P:lipopolysaccharide biosynthetic process"/>
    <property type="evidence" value="ECO:0007669"/>
    <property type="project" value="UniProtKB-UniRule"/>
</dbReference>
<dbReference type="CDD" id="cd02517">
    <property type="entry name" value="CMP-KDO-Synthetase"/>
    <property type="match status" value="1"/>
</dbReference>
<dbReference type="FunFam" id="3.90.550.10:FF:000011">
    <property type="entry name" value="3-deoxy-manno-octulosonate cytidylyltransferase"/>
    <property type="match status" value="1"/>
</dbReference>
<dbReference type="Gene3D" id="3.90.550.10">
    <property type="entry name" value="Spore Coat Polysaccharide Biosynthesis Protein SpsA, Chain A"/>
    <property type="match status" value="1"/>
</dbReference>
<dbReference type="HAMAP" id="MF_00057">
    <property type="entry name" value="KdsB"/>
    <property type="match status" value="1"/>
</dbReference>
<dbReference type="InterPro" id="IPR003329">
    <property type="entry name" value="Cytidylyl_trans"/>
</dbReference>
<dbReference type="InterPro" id="IPR004528">
    <property type="entry name" value="KdsB"/>
</dbReference>
<dbReference type="InterPro" id="IPR029044">
    <property type="entry name" value="Nucleotide-diphossugar_trans"/>
</dbReference>
<dbReference type="NCBIfam" id="TIGR00466">
    <property type="entry name" value="kdsB"/>
    <property type="match status" value="1"/>
</dbReference>
<dbReference type="NCBIfam" id="NF003952">
    <property type="entry name" value="PRK05450.1-5"/>
    <property type="match status" value="1"/>
</dbReference>
<dbReference type="NCBIfam" id="NF009905">
    <property type="entry name" value="PRK13368.1"/>
    <property type="match status" value="1"/>
</dbReference>
<dbReference type="PANTHER" id="PTHR42866">
    <property type="entry name" value="3-DEOXY-MANNO-OCTULOSONATE CYTIDYLYLTRANSFERASE"/>
    <property type="match status" value="1"/>
</dbReference>
<dbReference type="PANTHER" id="PTHR42866:SF2">
    <property type="entry name" value="3-DEOXY-MANNO-OCTULOSONATE CYTIDYLYLTRANSFERASE, MITOCHONDRIAL"/>
    <property type="match status" value="1"/>
</dbReference>
<dbReference type="Pfam" id="PF02348">
    <property type="entry name" value="CTP_transf_3"/>
    <property type="match status" value="1"/>
</dbReference>
<dbReference type="SUPFAM" id="SSF53448">
    <property type="entry name" value="Nucleotide-diphospho-sugar transferases"/>
    <property type="match status" value="1"/>
</dbReference>
<sequence>MHFRVVIPARYGSSRLPGKPLADIGGRPMVLHVLDRALQAGAESVVVATDDARVQAAVEAAGHQALLTSPDHQSGTERLVEVAETLGWPDDTLVVNVQGDEPLIDPALIREAARQLVVHTDAVMATLAHPIHDHADFVNPNVVKVVADEAGYAVYFSRAPIPWPRDAFAAEQPMPHEIGALRHIGLYAYRAGFLRTYASLASSPLERCEMLEQLRVLWHGYRISLGVTPTAPAPGVDTADDLARVRALFAAV</sequence>